<sequence>MAKGQSLQDPYLNALRRERIPVSIYLVNGIKLQGQIESFDQFVILLKNTVNQMVYKHAISTVVPARSVSHHNNPQQQQQHSQQTESAAPAAEPQAE</sequence>
<organism>
    <name type="scientific">Mannheimia succiniciproducens (strain KCTC 0769BP / MBEL55E)</name>
    <dbReference type="NCBI Taxonomy" id="221988"/>
    <lineage>
        <taxon>Bacteria</taxon>
        <taxon>Pseudomonadati</taxon>
        <taxon>Pseudomonadota</taxon>
        <taxon>Gammaproteobacteria</taxon>
        <taxon>Pasteurellales</taxon>
        <taxon>Pasteurellaceae</taxon>
        <taxon>Basfia</taxon>
    </lineage>
</organism>
<comment type="function">
    <text evidence="1">RNA chaperone that binds small regulatory RNA (sRNAs) and mRNAs to facilitate mRNA translational regulation in response to envelope stress, environmental stress and changes in metabolite concentrations. Also binds with high specificity to tRNAs.</text>
</comment>
<comment type="subunit">
    <text evidence="1">Homohexamer.</text>
</comment>
<comment type="similarity">
    <text evidence="1">Belongs to the Hfq family.</text>
</comment>
<keyword id="KW-0694">RNA-binding</keyword>
<keyword id="KW-0346">Stress response</keyword>
<reference key="1">
    <citation type="journal article" date="2004" name="Nat. Biotechnol.">
        <title>The genome sequence of the capnophilic rumen bacterium Mannheimia succiniciproducens.</title>
        <authorList>
            <person name="Hong S.H."/>
            <person name="Kim J.S."/>
            <person name="Lee S.Y."/>
            <person name="In Y.H."/>
            <person name="Choi S.S."/>
            <person name="Rih J.-K."/>
            <person name="Kim C.H."/>
            <person name="Jeong H."/>
            <person name="Hur C.G."/>
            <person name="Kim J.J."/>
        </authorList>
    </citation>
    <scope>NUCLEOTIDE SEQUENCE [LARGE SCALE GENOMIC DNA]</scope>
    <source>
        <strain>KCTC 0769BP / MBEL55E</strain>
    </source>
</reference>
<proteinExistence type="inferred from homology"/>
<name>HFQ_MANSM</name>
<protein>
    <recommendedName>
        <fullName evidence="1">RNA-binding protein Hfq</fullName>
    </recommendedName>
</protein>
<evidence type="ECO:0000255" key="1">
    <source>
        <dbReference type="HAMAP-Rule" id="MF_00436"/>
    </source>
</evidence>
<evidence type="ECO:0000255" key="2">
    <source>
        <dbReference type="PROSITE-ProRule" id="PRU01346"/>
    </source>
</evidence>
<evidence type="ECO:0000256" key="3">
    <source>
        <dbReference type="SAM" id="MobiDB-lite"/>
    </source>
</evidence>
<accession>Q65SD5</accession>
<feature type="chain" id="PRO_0000095649" description="RNA-binding protein Hfq">
    <location>
        <begin position="1"/>
        <end position="96"/>
    </location>
</feature>
<feature type="domain" description="Sm" evidence="2">
    <location>
        <begin position="9"/>
        <end position="68"/>
    </location>
</feature>
<feature type="region of interest" description="Disordered" evidence="3">
    <location>
        <begin position="65"/>
        <end position="96"/>
    </location>
</feature>
<feature type="compositionally biased region" description="Low complexity" evidence="3">
    <location>
        <begin position="70"/>
        <end position="96"/>
    </location>
</feature>
<gene>
    <name evidence="1" type="primary">hfq</name>
    <name type="ordered locus">MS1518</name>
</gene>
<dbReference type="EMBL" id="AE016827">
    <property type="protein sequence ID" value="AAU38125.1"/>
    <property type="molecule type" value="Genomic_DNA"/>
</dbReference>
<dbReference type="RefSeq" id="WP_011200691.1">
    <property type="nucleotide sequence ID" value="NC_006300.1"/>
</dbReference>
<dbReference type="SMR" id="Q65SD5"/>
<dbReference type="STRING" id="221988.MS1518"/>
<dbReference type="KEGG" id="msu:MS1518"/>
<dbReference type="eggNOG" id="COG1923">
    <property type="taxonomic scope" value="Bacteria"/>
</dbReference>
<dbReference type="HOGENOM" id="CLU_113688_2_2_6"/>
<dbReference type="OrthoDB" id="9799751at2"/>
<dbReference type="Proteomes" id="UP000000607">
    <property type="component" value="Chromosome"/>
</dbReference>
<dbReference type="GO" id="GO:0005829">
    <property type="term" value="C:cytosol"/>
    <property type="evidence" value="ECO:0007669"/>
    <property type="project" value="TreeGrafter"/>
</dbReference>
<dbReference type="GO" id="GO:0003723">
    <property type="term" value="F:RNA binding"/>
    <property type="evidence" value="ECO:0007669"/>
    <property type="project" value="UniProtKB-UniRule"/>
</dbReference>
<dbReference type="GO" id="GO:0006355">
    <property type="term" value="P:regulation of DNA-templated transcription"/>
    <property type="evidence" value="ECO:0007669"/>
    <property type="project" value="InterPro"/>
</dbReference>
<dbReference type="GO" id="GO:0043487">
    <property type="term" value="P:regulation of RNA stability"/>
    <property type="evidence" value="ECO:0007669"/>
    <property type="project" value="TreeGrafter"/>
</dbReference>
<dbReference type="GO" id="GO:0045974">
    <property type="term" value="P:regulation of translation, ncRNA-mediated"/>
    <property type="evidence" value="ECO:0007669"/>
    <property type="project" value="TreeGrafter"/>
</dbReference>
<dbReference type="CDD" id="cd01716">
    <property type="entry name" value="Hfq"/>
    <property type="match status" value="1"/>
</dbReference>
<dbReference type="FunFam" id="2.30.30.100:FF:000001">
    <property type="entry name" value="RNA-binding protein Hfq"/>
    <property type="match status" value="1"/>
</dbReference>
<dbReference type="Gene3D" id="2.30.30.100">
    <property type="match status" value="1"/>
</dbReference>
<dbReference type="HAMAP" id="MF_00436">
    <property type="entry name" value="Hfq"/>
    <property type="match status" value="1"/>
</dbReference>
<dbReference type="InterPro" id="IPR005001">
    <property type="entry name" value="Hfq"/>
</dbReference>
<dbReference type="InterPro" id="IPR010920">
    <property type="entry name" value="LSM_dom_sf"/>
</dbReference>
<dbReference type="InterPro" id="IPR047575">
    <property type="entry name" value="Sm"/>
</dbReference>
<dbReference type="NCBIfam" id="TIGR02383">
    <property type="entry name" value="Hfq"/>
    <property type="match status" value="1"/>
</dbReference>
<dbReference type="NCBIfam" id="NF001602">
    <property type="entry name" value="PRK00395.1"/>
    <property type="match status" value="1"/>
</dbReference>
<dbReference type="PANTHER" id="PTHR34772">
    <property type="entry name" value="RNA-BINDING PROTEIN HFQ"/>
    <property type="match status" value="1"/>
</dbReference>
<dbReference type="PANTHER" id="PTHR34772:SF1">
    <property type="entry name" value="RNA-BINDING PROTEIN HFQ"/>
    <property type="match status" value="1"/>
</dbReference>
<dbReference type="Pfam" id="PF17209">
    <property type="entry name" value="Hfq"/>
    <property type="match status" value="1"/>
</dbReference>
<dbReference type="SUPFAM" id="SSF50182">
    <property type="entry name" value="Sm-like ribonucleoproteins"/>
    <property type="match status" value="1"/>
</dbReference>
<dbReference type="PROSITE" id="PS52002">
    <property type="entry name" value="SM"/>
    <property type="match status" value="1"/>
</dbReference>